<evidence type="ECO:0000255" key="1">
    <source>
        <dbReference type="HAMAP-Rule" id="MF_00641"/>
    </source>
</evidence>
<feature type="chain" id="PRO_1000056916" description="Malate synthase G">
    <location>
        <begin position="1"/>
        <end position="728"/>
    </location>
</feature>
<feature type="active site" description="Proton acceptor" evidence="1">
    <location>
        <position position="345"/>
    </location>
</feature>
<feature type="active site" description="Proton donor" evidence="1">
    <location>
        <position position="636"/>
    </location>
</feature>
<feature type="binding site" evidence="1">
    <location>
        <position position="123"/>
    </location>
    <ligand>
        <name>acetyl-CoA</name>
        <dbReference type="ChEBI" id="CHEBI:57288"/>
    </ligand>
</feature>
<feature type="binding site" evidence="1">
    <location>
        <begin position="130"/>
        <end position="131"/>
    </location>
    <ligand>
        <name>acetyl-CoA</name>
        <dbReference type="ChEBI" id="CHEBI:57288"/>
    </ligand>
</feature>
<feature type="binding site" evidence="1">
    <location>
        <position position="281"/>
    </location>
    <ligand>
        <name>acetyl-CoA</name>
        <dbReference type="ChEBI" id="CHEBI:57288"/>
    </ligand>
</feature>
<feature type="binding site" evidence="1">
    <location>
        <position position="318"/>
    </location>
    <ligand>
        <name>acetyl-CoA</name>
        <dbReference type="ChEBI" id="CHEBI:57288"/>
    </ligand>
</feature>
<feature type="binding site" evidence="1">
    <location>
        <position position="345"/>
    </location>
    <ligand>
        <name>glyoxylate</name>
        <dbReference type="ChEBI" id="CHEBI:36655"/>
    </ligand>
</feature>
<feature type="binding site" evidence="1">
    <location>
        <position position="437"/>
    </location>
    <ligand>
        <name>glyoxylate</name>
        <dbReference type="ChEBI" id="CHEBI:36655"/>
    </ligand>
</feature>
<feature type="binding site" evidence="1">
    <location>
        <position position="437"/>
    </location>
    <ligand>
        <name>Mg(2+)</name>
        <dbReference type="ChEBI" id="CHEBI:18420"/>
    </ligand>
</feature>
<feature type="binding site" evidence="1">
    <location>
        <begin position="462"/>
        <end position="465"/>
    </location>
    <ligand>
        <name>glyoxylate</name>
        <dbReference type="ChEBI" id="CHEBI:36655"/>
    </ligand>
</feature>
<feature type="binding site" evidence="1">
    <location>
        <position position="465"/>
    </location>
    <ligand>
        <name>Mg(2+)</name>
        <dbReference type="ChEBI" id="CHEBI:18420"/>
    </ligand>
</feature>
<feature type="binding site" evidence="1">
    <location>
        <position position="546"/>
    </location>
    <ligand>
        <name>acetyl-CoA</name>
        <dbReference type="ChEBI" id="CHEBI:57288"/>
    </ligand>
</feature>
<feature type="modified residue" description="Cysteine sulfenic acid (-SOH)" evidence="1">
    <location>
        <position position="622"/>
    </location>
</feature>
<comment type="function">
    <text evidence="1">Involved in the glycolate utilization. Catalyzes the condensation and subsequent hydrolysis of acetyl-coenzyme A (acetyl-CoA) and glyoxylate to form malate and CoA.</text>
</comment>
<comment type="catalytic activity">
    <reaction evidence="1">
        <text>glyoxylate + acetyl-CoA + H2O = (S)-malate + CoA + H(+)</text>
        <dbReference type="Rhea" id="RHEA:18181"/>
        <dbReference type="ChEBI" id="CHEBI:15377"/>
        <dbReference type="ChEBI" id="CHEBI:15378"/>
        <dbReference type="ChEBI" id="CHEBI:15589"/>
        <dbReference type="ChEBI" id="CHEBI:36655"/>
        <dbReference type="ChEBI" id="CHEBI:57287"/>
        <dbReference type="ChEBI" id="CHEBI:57288"/>
        <dbReference type="EC" id="2.3.3.9"/>
    </reaction>
</comment>
<comment type="cofactor">
    <cofactor evidence="1">
        <name>Mg(2+)</name>
        <dbReference type="ChEBI" id="CHEBI:18420"/>
    </cofactor>
</comment>
<comment type="pathway">
    <text evidence="1">Carbohydrate metabolism; glyoxylate cycle; (S)-malate from isocitrate: step 2/2.</text>
</comment>
<comment type="subunit">
    <text evidence="1">Monomer.</text>
</comment>
<comment type="subcellular location">
    <subcellularLocation>
        <location evidence="1">Cytoplasm</location>
    </subcellularLocation>
</comment>
<comment type="similarity">
    <text evidence="1">Belongs to the malate synthase family. GlcB subfamily.</text>
</comment>
<keyword id="KW-0963">Cytoplasm</keyword>
<keyword id="KW-0329">Glyoxylate bypass</keyword>
<keyword id="KW-0460">Magnesium</keyword>
<keyword id="KW-0479">Metal-binding</keyword>
<keyword id="KW-0558">Oxidation</keyword>
<keyword id="KW-1185">Reference proteome</keyword>
<keyword id="KW-0808">Transferase</keyword>
<keyword id="KW-0816">Tricarboxylic acid cycle</keyword>
<name>MASZ_BRUA4</name>
<gene>
    <name evidence="1" type="primary">glcB</name>
    <name type="ordered locus">Oant_1269</name>
</gene>
<organism>
    <name type="scientific">Brucella anthropi (strain ATCC 49188 / DSM 6882 / CCUG 24695 / JCM 21032 / LMG 3331 / NBRC 15819 / NCTC 12168 / Alc 37)</name>
    <name type="common">Ochrobactrum anthropi</name>
    <dbReference type="NCBI Taxonomy" id="439375"/>
    <lineage>
        <taxon>Bacteria</taxon>
        <taxon>Pseudomonadati</taxon>
        <taxon>Pseudomonadota</taxon>
        <taxon>Alphaproteobacteria</taxon>
        <taxon>Hyphomicrobiales</taxon>
        <taxon>Brucellaceae</taxon>
        <taxon>Brucella/Ochrobactrum group</taxon>
        <taxon>Brucella</taxon>
    </lineage>
</organism>
<accession>A6WYD2</accession>
<proteinExistence type="inferred from homology"/>
<sequence>MVSQKAGNYVEIEGLRVAPELVEFLAKEAAPGTGVEPEKFWKGFAAIIRDLAPKNRALLAKRDDLQAKIDAWYKQNRDKGYSQADYQQFLKNIGYLLPEGGEFSVSTTNVDPEITHIAGPQLVVPVMNARYALNAANARWGSLYDALYGTDAISDADGGEKGKGYNPKRGEKVIAWAKNFLDESAPLATGNWANVAGLAVKDGKLEIKLTDGSATALKDANQFKGYNGDAAAPTNVLLAKNNMHVDIVVNADHPIGKTDPAHIADVVLESAVSTIQDCEDSIAAVDAEDKVAVYRNWLGLMNGKLEDTFEKNGKQMTRRLNGDRSYKAADGSTLSLKGRSLMLVRNVGHLMTNPAIIDADGHEVPEGIMDAAFTSLIALHDIGPNGRHMNSREGSVYIVKPKMHGPEEVAFANEIFTRTEEMLGMKPNTLKIGIMDEERRTTVNLKEAIRAAKERVVFINTGFLDRTGDEIHTSMEAGPMIRKGDMKQAAWIGAYEQWNVDIGLECGLSGHAQIGKGMWAMPDLMAAMLEQKIAHPKAGANTAWVPSPTAATLHATHYHQVDVAAVQAKLKSRPRAKLDDILSVPVATRPNWTPEDIQHEIDNNAQGILGYVVRWVDQGVGCSKVPDINNVGLMEDRATLRISAQHIANWLYHGVVSEAQVMETMKRMAAVVDKQNEGDALYRPMAADFDKSIAFQAACDLVFKGREQPNGYTEPVLHRRRLELKAQG</sequence>
<reference key="1">
    <citation type="journal article" date="2011" name="J. Bacteriol.">
        <title>Genome of Ochrobactrum anthropi ATCC 49188 T, a versatile opportunistic pathogen and symbiont of several eukaryotic hosts.</title>
        <authorList>
            <person name="Chain P.S."/>
            <person name="Lang D.M."/>
            <person name="Comerci D.J."/>
            <person name="Malfatti S.A."/>
            <person name="Vergez L.M."/>
            <person name="Shin M."/>
            <person name="Ugalde R.A."/>
            <person name="Garcia E."/>
            <person name="Tolmasky M.E."/>
        </authorList>
    </citation>
    <scope>NUCLEOTIDE SEQUENCE [LARGE SCALE GENOMIC DNA]</scope>
    <source>
        <strain>ATCC 49188 / DSM 6882 / CCUG 24695 / JCM 21032 / LMG 3331 / NBRC 15819 / NCTC 12168 / Alc 37</strain>
    </source>
</reference>
<protein>
    <recommendedName>
        <fullName evidence="1">Malate synthase G</fullName>
        <ecNumber evidence="1">2.3.3.9</ecNumber>
    </recommendedName>
</protein>
<dbReference type="EC" id="2.3.3.9" evidence="1"/>
<dbReference type="EMBL" id="CP000758">
    <property type="protein sequence ID" value="ABS13986.1"/>
    <property type="molecule type" value="Genomic_DNA"/>
</dbReference>
<dbReference type="RefSeq" id="WP_012091375.1">
    <property type="nucleotide sequence ID" value="NC_009667.1"/>
</dbReference>
<dbReference type="SMR" id="A6WYD2"/>
<dbReference type="STRING" id="439375.Oant_1269"/>
<dbReference type="KEGG" id="oan:Oant_1269"/>
<dbReference type="PATRIC" id="fig|439375.7.peg.1330"/>
<dbReference type="eggNOG" id="COG2225">
    <property type="taxonomic scope" value="Bacteria"/>
</dbReference>
<dbReference type="HOGENOM" id="CLU_028446_1_0_5"/>
<dbReference type="PhylomeDB" id="A6WYD2"/>
<dbReference type="UniPathway" id="UPA00703">
    <property type="reaction ID" value="UER00720"/>
</dbReference>
<dbReference type="Proteomes" id="UP000002301">
    <property type="component" value="Chromosome 1"/>
</dbReference>
<dbReference type="GO" id="GO:0005829">
    <property type="term" value="C:cytosol"/>
    <property type="evidence" value="ECO:0007669"/>
    <property type="project" value="TreeGrafter"/>
</dbReference>
<dbReference type="GO" id="GO:0000287">
    <property type="term" value="F:magnesium ion binding"/>
    <property type="evidence" value="ECO:0007669"/>
    <property type="project" value="TreeGrafter"/>
</dbReference>
<dbReference type="GO" id="GO:0004474">
    <property type="term" value="F:malate synthase activity"/>
    <property type="evidence" value="ECO:0007669"/>
    <property type="project" value="UniProtKB-UniRule"/>
</dbReference>
<dbReference type="GO" id="GO:0009436">
    <property type="term" value="P:glyoxylate catabolic process"/>
    <property type="evidence" value="ECO:0007669"/>
    <property type="project" value="TreeGrafter"/>
</dbReference>
<dbReference type="GO" id="GO:0006097">
    <property type="term" value="P:glyoxylate cycle"/>
    <property type="evidence" value="ECO:0007669"/>
    <property type="project" value="UniProtKB-UniRule"/>
</dbReference>
<dbReference type="GO" id="GO:0006099">
    <property type="term" value="P:tricarboxylic acid cycle"/>
    <property type="evidence" value="ECO:0007669"/>
    <property type="project" value="UniProtKB-KW"/>
</dbReference>
<dbReference type="CDD" id="cd00728">
    <property type="entry name" value="malate_synt_G"/>
    <property type="match status" value="1"/>
</dbReference>
<dbReference type="FunFam" id="3.20.20.360:FF:000002">
    <property type="entry name" value="Malate synthase G"/>
    <property type="match status" value="1"/>
</dbReference>
<dbReference type="Gene3D" id="3.20.20.360">
    <property type="entry name" value="Malate synthase, domain 3"/>
    <property type="match status" value="2"/>
</dbReference>
<dbReference type="Gene3D" id="1.20.1220.12">
    <property type="entry name" value="Malate synthase, domain III"/>
    <property type="match status" value="1"/>
</dbReference>
<dbReference type="HAMAP" id="MF_00641">
    <property type="entry name" value="Malate_synth_G"/>
    <property type="match status" value="1"/>
</dbReference>
<dbReference type="InterPro" id="IPR044856">
    <property type="entry name" value="Malate_synth_C_sf"/>
</dbReference>
<dbReference type="InterPro" id="IPR011076">
    <property type="entry name" value="Malate_synth_sf"/>
</dbReference>
<dbReference type="InterPro" id="IPR001465">
    <property type="entry name" value="Malate_synthase_TIM"/>
</dbReference>
<dbReference type="InterPro" id="IPR006253">
    <property type="entry name" value="Malate_synthG"/>
</dbReference>
<dbReference type="InterPro" id="IPR048355">
    <property type="entry name" value="MS_C"/>
</dbReference>
<dbReference type="InterPro" id="IPR048356">
    <property type="entry name" value="MS_N"/>
</dbReference>
<dbReference type="InterPro" id="IPR046363">
    <property type="entry name" value="MS_N_TIM-barrel_dom"/>
</dbReference>
<dbReference type="InterPro" id="IPR048357">
    <property type="entry name" value="MSG_insertion"/>
</dbReference>
<dbReference type="NCBIfam" id="TIGR01345">
    <property type="entry name" value="malate_syn_G"/>
    <property type="match status" value="1"/>
</dbReference>
<dbReference type="NCBIfam" id="NF002825">
    <property type="entry name" value="PRK02999.1"/>
    <property type="match status" value="1"/>
</dbReference>
<dbReference type="PANTHER" id="PTHR42739">
    <property type="entry name" value="MALATE SYNTHASE G"/>
    <property type="match status" value="1"/>
</dbReference>
<dbReference type="PANTHER" id="PTHR42739:SF1">
    <property type="entry name" value="MALATE SYNTHASE G"/>
    <property type="match status" value="1"/>
</dbReference>
<dbReference type="Pfam" id="PF20659">
    <property type="entry name" value="MS_C"/>
    <property type="match status" value="1"/>
</dbReference>
<dbReference type="Pfam" id="PF20656">
    <property type="entry name" value="MS_N"/>
    <property type="match status" value="1"/>
</dbReference>
<dbReference type="Pfam" id="PF01274">
    <property type="entry name" value="MS_TIM-barrel"/>
    <property type="match status" value="1"/>
</dbReference>
<dbReference type="Pfam" id="PF20658">
    <property type="entry name" value="MSG_insertion"/>
    <property type="match status" value="1"/>
</dbReference>
<dbReference type="SUPFAM" id="SSF51645">
    <property type="entry name" value="Malate synthase G"/>
    <property type="match status" value="1"/>
</dbReference>